<comment type="function">
    <text evidence="1">Essential subunit of the Sec protein translocation channel SecYEG. Clamps together the 2 halves of SecY. May contact the channel plug during translocation.</text>
</comment>
<comment type="subunit">
    <text evidence="1">Component of the Sec protein translocase complex. Heterotrimer consisting of SecY, SecE and SecG subunits. The heterotrimers can form oligomers, although 1 heterotrimer is thought to be able to translocate proteins. Interacts with the ribosome. Interacts with SecDF, and other proteins may be involved. Interacts with SecA.</text>
</comment>
<comment type="subcellular location">
    <subcellularLocation>
        <location evidence="1">Cell inner membrane</location>
        <topology evidence="1">Single-pass membrane protein</topology>
    </subcellularLocation>
</comment>
<comment type="similarity">
    <text evidence="1">Belongs to the SecE/SEC61-gamma family.</text>
</comment>
<dbReference type="EMBL" id="AE000520">
    <property type="protein sequence ID" value="AAC65223.1"/>
    <property type="molecule type" value="Genomic_DNA"/>
</dbReference>
<dbReference type="PIR" id="E71349">
    <property type="entry name" value="E71349"/>
</dbReference>
<dbReference type="RefSeq" id="WP_010881683.1">
    <property type="nucleotide sequence ID" value="NC_021490.2"/>
</dbReference>
<dbReference type="SMR" id="O83263"/>
<dbReference type="IntAct" id="O83263">
    <property type="interactions" value="1"/>
</dbReference>
<dbReference type="STRING" id="243276.TP_0235"/>
<dbReference type="EnsemblBacteria" id="AAC65223">
    <property type="protein sequence ID" value="AAC65223"/>
    <property type="gene ID" value="TP_0235"/>
</dbReference>
<dbReference type="GeneID" id="93876027"/>
<dbReference type="KEGG" id="tpa:TP_0235"/>
<dbReference type="KEGG" id="tpw:TPANIC_0235"/>
<dbReference type="eggNOG" id="COG0690">
    <property type="taxonomic scope" value="Bacteria"/>
</dbReference>
<dbReference type="HOGENOM" id="CLU_113663_8_0_12"/>
<dbReference type="Proteomes" id="UP000000811">
    <property type="component" value="Chromosome"/>
</dbReference>
<dbReference type="GO" id="GO:0005886">
    <property type="term" value="C:plasma membrane"/>
    <property type="evidence" value="ECO:0007669"/>
    <property type="project" value="UniProtKB-SubCell"/>
</dbReference>
<dbReference type="GO" id="GO:0008320">
    <property type="term" value="F:protein transmembrane transporter activity"/>
    <property type="evidence" value="ECO:0007669"/>
    <property type="project" value="UniProtKB-UniRule"/>
</dbReference>
<dbReference type="GO" id="GO:0065002">
    <property type="term" value="P:intracellular protein transmembrane transport"/>
    <property type="evidence" value="ECO:0007669"/>
    <property type="project" value="UniProtKB-UniRule"/>
</dbReference>
<dbReference type="GO" id="GO:0009306">
    <property type="term" value="P:protein secretion"/>
    <property type="evidence" value="ECO:0007669"/>
    <property type="project" value="UniProtKB-UniRule"/>
</dbReference>
<dbReference type="GO" id="GO:0006605">
    <property type="term" value="P:protein targeting"/>
    <property type="evidence" value="ECO:0007669"/>
    <property type="project" value="UniProtKB-UniRule"/>
</dbReference>
<dbReference type="GO" id="GO:0043952">
    <property type="term" value="P:protein transport by the Sec complex"/>
    <property type="evidence" value="ECO:0007669"/>
    <property type="project" value="UniProtKB-UniRule"/>
</dbReference>
<dbReference type="Gene3D" id="1.20.5.1030">
    <property type="entry name" value="Preprotein translocase secy subunit"/>
    <property type="match status" value="1"/>
</dbReference>
<dbReference type="HAMAP" id="MF_00422">
    <property type="entry name" value="SecE"/>
    <property type="match status" value="1"/>
</dbReference>
<dbReference type="InterPro" id="IPR005807">
    <property type="entry name" value="SecE_bac"/>
</dbReference>
<dbReference type="InterPro" id="IPR038379">
    <property type="entry name" value="SecE_sf"/>
</dbReference>
<dbReference type="InterPro" id="IPR001901">
    <property type="entry name" value="Translocase_SecE/Sec61-g"/>
</dbReference>
<dbReference type="NCBIfam" id="TIGR00964">
    <property type="entry name" value="secE_bact"/>
    <property type="match status" value="1"/>
</dbReference>
<dbReference type="PANTHER" id="PTHR33910">
    <property type="entry name" value="PROTEIN TRANSLOCASE SUBUNIT SECE"/>
    <property type="match status" value="1"/>
</dbReference>
<dbReference type="PANTHER" id="PTHR33910:SF1">
    <property type="entry name" value="PROTEIN TRANSLOCASE SUBUNIT SECE"/>
    <property type="match status" value="1"/>
</dbReference>
<dbReference type="Pfam" id="PF00584">
    <property type="entry name" value="SecE"/>
    <property type="match status" value="1"/>
</dbReference>
<dbReference type="PROSITE" id="PS01067">
    <property type="entry name" value="SECE_SEC61G"/>
    <property type="match status" value="1"/>
</dbReference>
<protein>
    <recommendedName>
        <fullName evidence="1">Protein translocase subunit SecE</fullName>
    </recommendedName>
</protein>
<feature type="chain" id="PRO_0000104191" description="Protein translocase subunit SecE">
    <location>
        <begin position="1"/>
        <end position="59"/>
    </location>
</feature>
<feature type="transmembrane region" description="Helical" evidence="1">
    <location>
        <begin position="39"/>
        <end position="59"/>
    </location>
</feature>
<proteinExistence type="inferred from homology"/>
<sequence>MLKFAKFRRECVAEFRRVVWPARTQVHTAVKVVLVSTVVMALFLGLIDALFVALLSFFF</sequence>
<name>SECE_TREPA</name>
<keyword id="KW-0997">Cell inner membrane</keyword>
<keyword id="KW-1003">Cell membrane</keyword>
<keyword id="KW-0472">Membrane</keyword>
<keyword id="KW-0653">Protein transport</keyword>
<keyword id="KW-1185">Reference proteome</keyword>
<keyword id="KW-0811">Translocation</keyword>
<keyword id="KW-0812">Transmembrane</keyword>
<keyword id="KW-1133">Transmembrane helix</keyword>
<keyword id="KW-0813">Transport</keyword>
<evidence type="ECO:0000255" key="1">
    <source>
        <dbReference type="HAMAP-Rule" id="MF_00422"/>
    </source>
</evidence>
<gene>
    <name evidence="1" type="primary">secE</name>
    <name type="ordered locus">TP_0235</name>
</gene>
<accession>O83263</accession>
<organism>
    <name type="scientific">Treponema pallidum (strain Nichols)</name>
    <dbReference type="NCBI Taxonomy" id="243276"/>
    <lineage>
        <taxon>Bacteria</taxon>
        <taxon>Pseudomonadati</taxon>
        <taxon>Spirochaetota</taxon>
        <taxon>Spirochaetia</taxon>
        <taxon>Spirochaetales</taxon>
        <taxon>Treponemataceae</taxon>
        <taxon>Treponema</taxon>
    </lineage>
</organism>
<reference key="1">
    <citation type="journal article" date="1998" name="Science">
        <title>Complete genome sequence of Treponema pallidum, the syphilis spirochete.</title>
        <authorList>
            <person name="Fraser C.M."/>
            <person name="Norris S.J."/>
            <person name="Weinstock G.M."/>
            <person name="White O."/>
            <person name="Sutton G.G."/>
            <person name="Dodson R.J."/>
            <person name="Gwinn M.L."/>
            <person name="Hickey E.K."/>
            <person name="Clayton R.A."/>
            <person name="Ketchum K.A."/>
            <person name="Sodergren E."/>
            <person name="Hardham J.M."/>
            <person name="McLeod M.P."/>
            <person name="Salzberg S.L."/>
            <person name="Peterson J.D."/>
            <person name="Khalak H.G."/>
            <person name="Richardson D.L."/>
            <person name="Howell J.K."/>
            <person name="Chidambaram M."/>
            <person name="Utterback T.R."/>
            <person name="McDonald L.A."/>
            <person name="Artiach P."/>
            <person name="Bowman C."/>
            <person name="Cotton M.D."/>
            <person name="Fujii C."/>
            <person name="Garland S.A."/>
            <person name="Hatch B."/>
            <person name="Horst K."/>
            <person name="Roberts K.M."/>
            <person name="Sandusky M."/>
            <person name="Weidman J.F."/>
            <person name="Smith H.O."/>
            <person name="Venter J.C."/>
        </authorList>
    </citation>
    <scope>NUCLEOTIDE SEQUENCE [LARGE SCALE GENOMIC DNA]</scope>
    <source>
        <strain>Nichols</strain>
    </source>
</reference>